<dbReference type="EMBL" id="D00792">
    <property type="protein sequence ID" value="BAA00688.1"/>
    <property type="molecule type" value="Genomic_DNA"/>
</dbReference>
<dbReference type="PIR" id="S69498">
    <property type="entry name" value="S69498"/>
</dbReference>
<dbReference type="RefSeq" id="NP_001119735.1">
    <property type="nucleotide sequence ID" value="NM_001126263.1"/>
</dbReference>
<dbReference type="EnsemblMetazoa" id="NM_001126263.2">
    <property type="protein sequence ID" value="NP_001119735.1"/>
    <property type="gene ID" value="GeneID_100147697"/>
</dbReference>
<dbReference type="GeneID" id="100147697"/>
<dbReference type="KEGG" id="bmor:100147697"/>
<dbReference type="CTD" id="100147697"/>
<dbReference type="HOGENOM" id="CLU_125164_2_0_1"/>
<dbReference type="InParanoid" id="P26735"/>
<dbReference type="OrthoDB" id="493443at7088"/>
<dbReference type="Proteomes" id="UP000005204">
    <property type="component" value="Unassembled WGS sequence"/>
</dbReference>
<dbReference type="GO" id="GO:0005615">
    <property type="term" value="C:extracellular space"/>
    <property type="evidence" value="ECO:0007669"/>
    <property type="project" value="InterPro"/>
</dbReference>
<dbReference type="GO" id="GO:0008083">
    <property type="term" value="F:growth factor activity"/>
    <property type="evidence" value="ECO:0007669"/>
    <property type="project" value="InterPro"/>
</dbReference>
<dbReference type="GO" id="GO:0005179">
    <property type="term" value="F:hormone activity"/>
    <property type="evidence" value="ECO:0007669"/>
    <property type="project" value="UniProtKB-KW"/>
</dbReference>
<dbReference type="CDD" id="cd04366">
    <property type="entry name" value="IlGF_insulin_bombyxin_like"/>
    <property type="match status" value="1"/>
</dbReference>
<dbReference type="Gene3D" id="1.10.100.10">
    <property type="entry name" value="Insulin-like"/>
    <property type="match status" value="1"/>
</dbReference>
<dbReference type="InterPro" id="IPR017097">
    <property type="entry name" value="Bombyxin"/>
</dbReference>
<dbReference type="InterPro" id="IPR016179">
    <property type="entry name" value="Insulin-like"/>
</dbReference>
<dbReference type="InterPro" id="IPR036438">
    <property type="entry name" value="Insulin-like_sf"/>
</dbReference>
<dbReference type="InterPro" id="IPR022353">
    <property type="entry name" value="Insulin_CS"/>
</dbReference>
<dbReference type="InterPro" id="IPR022352">
    <property type="entry name" value="Insulin_family"/>
</dbReference>
<dbReference type="PANTHER" id="PTHR13647:SF4">
    <property type="entry name" value="INSULIN-LIKE PEPTIDE 1-RELATED"/>
    <property type="match status" value="1"/>
</dbReference>
<dbReference type="PANTHER" id="PTHR13647">
    <property type="entry name" value="INSULIN-LIKE PEPTIDE 2-RELATED"/>
    <property type="match status" value="1"/>
</dbReference>
<dbReference type="Pfam" id="PF00049">
    <property type="entry name" value="Insulin"/>
    <property type="match status" value="1"/>
</dbReference>
<dbReference type="PIRSF" id="PIRSF037038">
    <property type="entry name" value="Bombyxin"/>
    <property type="match status" value="1"/>
</dbReference>
<dbReference type="PRINTS" id="PR02003">
    <property type="entry name" value="BOMBYXIN"/>
</dbReference>
<dbReference type="PRINTS" id="PR00276">
    <property type="entry name" value="INSULINFAMLY"/>
</dbReference>
<dbReference type="SMART" id="SM00078">
    <property type="entry name" value="IlGF"/>
    <property type="match status" value="1"/>
</dbReference>
<dbReference type="SUPFAM" id="SSF56994">
    <property type="entry name" value="Insulin-like"/>
    <property type="match status" value="1"/>
</dbReference>
<dbReference type="PROSITE" id="PS00262">
    <property type="entry name" value="INSULIN"/>
    <property type="match status" value="1"/>
</dbReference>
<evidence type="ECO:0000250" key="1"/>
<evidence type="ECO:0000255" key="2"/>
<evidence type="ECO:0000305" key="3"/>
<accession>P26735</accession>
<sequence>MKLVILLVVVSAMLVLGGAQTASQFYCGDFLARTMSILCWPDMPKRSGSQYAGYGWPWLPPFSSSRGKRGIVDECCYRPCTTDVLKLYCDKQITI</sequence>
<proteinExistence type="inferred from homology"/>
<comment type="function">
    <text>Brain peptide responsible for activation of prothoracic glands to produce ecdysone in insects.</text>
</comment>
<comment type="subunit">
    <text>Heterodimer of a B chain and an A chain linked by two disulfide bonds.</text>
</comment>
<comment type="subcellular location">
    <subcellularLocation>
        <location>Secreted</location>
    </subcellularLocation>
</comment>
<comment type="miscellaneous">
    <text>Silk worm has two kinds of PTTH: 4K-PTTH and 22K-PTTH; there are many forms of 4K-PTTH.</text>
</comment>
<comment type="similarity">
    <text evidence="3">Belongs to the insulin family.</text>
</comment>
<keyword id="KW-0165">Cleavage on pair of basic residues</keyword>
<keyword id="KW-1015">Disulfide bond</keyword>
<keyword id="KW-0372">Hormone</keyword>
<keyword id="KW-0873">Pyrrolidone carboxylic acid</keyword>
<keyword id="KW-1185">Reference proteome</keyword>
<keyword id="KW-0964">Secreted</keyword>
<keyword id="KW-0732">Signal</keyword>
<reference key="1">
    <citation type="journal article" date="1996" name="J. Mol. Biol.">
        <title>Multiple gene copies for bombyxin, an insulin-related peptide of the silkmoth Bombyx mori: structural signs for gene rearrangement and duplication responsible for generation of multiple molecular forms of bombyxin.</title>
        <authorList>
            <person name="Kondo H."/>
            <person name="Ino M."/>
            <person name="Suzuki A."/>
            <person name="Ishizaki H."/>
            <person name="Iwami M."/>
        </authorList>
    </citation>
    <scope>NUCLEOTIDE SEQUENCE [GENOMIC DNA]</scope>
</reference>
<gene>
    <name type="primary">BBXC2</name>
</gene>
<feature type="signal peptide" evidence="2">
    <location>
        <begin position="1"/>
        <end position="19"/>
    </location>
</feature>
<feature type="peptide" id="PRO_0000016028" description="Bombyxin C-2 B chain">
    <location>
        <begin position="20"/>
        <end position="44"/>
    </location>
</feature>
<feature type="propeptide" id="PRO_0000016029" description="C peptide like">
    <location>
        <begin position="47"/>
        <end position="67"/>
    </location>
</feature>
<feature type="peptide" id="PRO_0000016030" description="Bombyxin C-2 A chain">
    <location>
        <begin position="70"/>
        <end position="95"/>
    </location>
</feature>
<feature type="modified residue" description="Pyrrolidone carboxylic acid" evidence="1">
    <location>
        <position position="20"/>
    </location>
</feature>
<feature type="disulfide bond" description="Interchain (between B and A chains)" evidence="1">
    <location>
        <begin position="27"/>
        <end position="76"/>
    </location>
</feature>
<feature type="disulfide bond" description="Interchain (between B and A chains)" evidence="1">
    <location>
        <begin position="39"/>
        <end position="89"/>
    </location>
</feature>
<feature type="disulfide bond" evidence="1">
    <location>
        <begin position="75"/>
        <end position="80"/>
    </location>
</feature>
<name>BXC2_BOMMO</name>
<protein>
    <recommendedName>
        <fullName>Bombyxin C-2</fullName>
        <shortName>BBX-C2</shortName>
    </recommendedName>
    <alternativeName>
        <fullName>4K-prothoracicotropic hormone</fullName>
        <shortName>4K-PTTH</shortName>
    </alternativeName>
    <component>
        <recommendedName>
            <fullName>Bombyxin C-2 B chain</fullName>
        </recommendedName>
    </component>
    <component>
        <recommendedName>
            <fullName>Bombyxin C-2 A chain</fullName>
        </recommendedName>
    </component>
</protein>
<organism>
    <name type="scientific">Bombyx mori</name>
    <name type="common">Silk moth</name>
    <dbReference type="NCBI Taxonomy" id="7091"/>
    <lineage>
        <taxon>Eukaryota</taxon>
        <taxon>Metazoa</taxon>
        <taxon>Ecdysozoa</taxon>
        <taxon>Arthropoda</taxon>
        <taxon>Hexapoda</taxon>
        <taxon>Insecta</taxon>
        <taxon>Pterygota</taxon>
        <taxon>Neoptera</taxon>
        <taxon>Endopterygota</taxon>
        <taxon>Lepidoptera</taxon>
        <taxon>Glossata</taxon>
        <taxon>Ditrysia</taxon>
        <taxon>Bombycoidea</taxon>
        <taxon>Bombycidae</taxon>
        <taxon>Bombycinae</taxon>
        <taxon>Bombyx</taxon>
    </lineage>
</organism>